<accession>Q8I6V3</accession>
<keyword id="KW-0002">3D-structure</keyword>
<keyword id="KW-0064">Aspartyl protease</keyword>
<keyword id="KW-1015">Disulfide bond</keyword>
<keyword id="KW-0378">Hydrolase</keyword>
<keyword id="KW-0472">Membrane</keyword>
<keyword id="KW-0645">Protease</keyword>
<keyword id="KW-1185">Reference proteome</keyword>
<keyword id="KW-0735">Signal-anchor</keyword>
<keyword id="KW-0812">Transmembrane</keyword>
<keyword id="KW-1133">Transmembrane helix</keyword>
<keyword id="KW-0926">Vacuole</keyword>
<organism evidence="14">
    <name type="scientific">Plasmodium falciparum (isolate 3D7)</name>
    <dbReference type="NCBI Taxonomy" id="36329"/>
    <lineage>
        <taxon>Eukaryota</taxon>
        <taxon>Sar</taxon>
        <taxon>Alveolata</taxon>
        <taxon>Apicomplexa</taxon>
        <taxon>Aconoidasida</taxon>
        <taxon>Haemosporida</taxon>
        <taxon>Plasmodiidae</taxon>
        <taxon>Plasmodium</taxon>
        <taxon>Plasmodium (Laverania)</taxon>
    </lineage>
</organism>
<proteinExistence type="evidence at protein level"/>
<sequence>MDITVREHDFKHGFIKSNSTFDGLNIDNSKNKKKIQKGFQILYVLLFCSVMCGLFYYVYENVWLQRDNEMNEILKNSEHLTIGFKVENAHDRILKTIKTHKLKNYIKESVNFLNSGLTKTNYLGSSNDNIELVDFQNIMFYGDAEVGDNQQPFTFILDTGSANLWVPSVKCTTAGCLTKHLYDSSKSRTYEKDGTKVEMNYVSGTVSGFFSKDLVTVGNLSLPYKFIEVIDTNGFEPTYTASTFDGILGLGWKDLSIGSVDPIVVELKNQNKIENALFTFYLPVHDKHTGFLTIGGIEERFYEGPLTYEKLNHDLYWQITLDAHVGNIMLEKANCIVDSGTSAITVPTDFLNKMLQNLDVIKVPFLPFYVTLCNNSKLPTFEFTSENGKYTLEPEYYLQHIEDVGPGLCMLNIIGLDFPVPTFILGDPFMRKYFTVFDYDNQSVGIALAKKNL</sequence>
<protein>
    <recommendedName>
        <fullName evidence="10">Plasmepsin II</fullName>
        <ecNumber evidence="9">3.4.23.39</ecNumber>
    </recommendedName>
    <alternativeName>
        <fullName evidence="12">Plasmepsin 2</fullName>
    </alternativeName>
</protein>
<reference evidence="14" key="1">
    <citation type="journal article" date="2002" name="Nature">
        <title>Genome sequence of the human malaria parasite Plasmodium falciparum.</title>
        <authorList>
            <person name="Gardner M.J."/>
            <person name="Hall N."/>
            <person name="Fung E."/>
            <person name="White O."/>
            <person name="Berriman M."/>
            <person name="Hyman R.W."/>
            <person name="Carlton J.M."/>
            <person name="Pain A."/>
            <person name="Nelson K.E."/>
            <person name="Bowman S."/>
            <person name="Paulsen I.T."/>
            <person name="James K.D."/>
            <person name="Eisen J.A."/>
            <person name="Rutherford K.M."/>
            <person name="Salzberg S.L."/>
            <person name="Craig A."/>
            <person name="Kyes S."/>
            <person name="Chan M.-S."/>
            <person name="Nene V."/>
            <person name="Shallom S.J."/>
            <person name="Suh B."/>
            <person name="Peterson J."/>
            <person name="Angiuoli S."/>
            <person name="Pertea M."/>
            <person name="Allen J."/>
            <person name="Selengut J."/>
            <person name="Haft D."/>
            <person name="Mather M.W."/>
            <person name="Vaidya A.B."/>
            <person name="Martin D.M.A."/>
            <person name="Fairlamb A.H."/>
            <person name="Fraunholz M.J."/>
            <person name="Roos D.S."/>
            <person name="Ralph S.A."/>
            <person name="McFadden G.I."/>
            <person name="Cummings L.M."/>
            <person name="Subramanian G.M."/>
            <person name="Mungall C."/>
            <person name="Venter J.C."/>
            <person name="Carucci D.J."/>
            <person name="Hoffman S.L."/>
            <person name="Newbold C."/>
            <person name="Davis R.W."/>
            <person name="Fraser C.M."/>
            <person name="Barrell B.G."/>
        </authorList>
    </citation>
    <scope>NUCLEOTIDE SEQUENCE [LARGE SCALE GENOMIC DNA]</scope>
    <source>
        <strain evidence="14">3D7</strain>
    </source>
</reference>
<reference evidence="12" key="2">
    <citation type="journal article" date="2004" name="J. Cell Biol.">
        <title>Trafficking of plasmepsin II to the food vacuole of the malaria parasite Plasmodium falciparum.</title>
        <authorList>
            <person name="Klemba M."/>
            <person name="Beatty W."/>
            <person name="Gluzman I."/>
            <person name="Goldberg D.E."/>
        </authorList>
    </citation>
    <scope>SUBCELLULAR LOCATION</scope>
    <scope>DEVELOPMENTAL STAGE</scope>
    <scope>PROTEOLYTIC CLEAVAGE</scope>
</reference>
<reference evidence="12" key="3">
    <citation type="journal article" date="2005" name="J. Biol. Chem.">
        <title>The role of Plasmodium falciparum food vacuole plasmepsins.</title>
        <authorList>
            <person name="Liu J."/>
            <person name="Gluzman I.Y."/>
            <person name="Drew M.E."/>
            <person name="Goldberg D.E."/>
        </authorList>
    </citation>
    <scope>DISRUPTION PHENOTYPE</scope>
</reference>
<reference evidence="12" key="4">
    <citation type="journal article" date="2008" name="J. Biol. Chem.">
        <title>Plasmodium food vacuole plasmepsins are activated by falcipains.</title>
        <authorList>
            <person name="Drew M.E."/>
            <person name="Banerjee R."/>
            <person name="Uffman E.W."/>
            <person name="Gilbertson S."/>
            <person name="Rosenthal P.J."/>
            <person name="Goldberg D.E."/>
        </authorList>
    </citation>
    <scope>PROTEOLYTIC CLEAVAGE</scope>
</reference>
<reference evidence="12" key="5">
    <citation type="journal article" date="2013" name="Proc. Natl. Acad. Sci. U.S.A.">
        <title>Protein complex directs hemoglobin-to-hemozoin formation in Plasmodium falciparum.</title>
        <authorList>
            <person name="Chugh M."/>
            <person name="Sundararaman V."/>
            <person name="Kumar S."/>
            <person name="Reddy V.S."/>
            <person name="Siddiqui W.A."/>
            <person name="Stuart K.D."/>
            <person name="Malhotra P."/>
        </authorList>
    </citation>
    <scope>IDENTIFICATION IN THE HEMOZOIN FORMATION COMPLEX</scope>
    <scope>SUBCELLULAR LOCATION</scope>
    <scope>DEVELOPMENTAL STAGE</scope>
    <scope>IDENTIFICATION BY MASS SPECTROMETRY</scope>
</reference>
<reference evidence="15 16 17 18 19" key="6">
    <citation type="journal article" date="2018" name="FEBS J.">
        <title>Deciphering the mechanism of potent peptidomimetic inhibitors targeting plasmepsins - biochemical and structural insights.</title>
        <authorList>
            <person name="Mishra V."/>
            <person name="Rathore I."/>
            <person name="Arekar A."/>
            <person name="Sthanam L.K."/>
            <person name="Xiao H."/>
            <person name="Kiso Y."/>
            <person name="Sen S."/>
            <person name="Patankar S."/>
            <person name="Gustchina A."/>
            <person name="Hidaka K."/>
            <person name="Wlodawer A."/>
            <person name="Yada R.Y."/>
            <person name="Bhaumik P."/>
        </authorList>
    </citation>
    <scope>X-RAY CRYSTALLOGRAPHY (1.90 ANGSTROMS) OF 126-453 IN COMPLEX WITH INHIBITOR</scope>
    <scope>FUNCTION</scope>
    <scope>CATALYTIC ACTIVITY</scope>
    <scope>ACTIVITY REGULATION</scope>
    <scope>DISULFIDE BONDS</scope>
</reference>
<dbReference type="EC" id="3.4.23.39" evidence="9"/>
<dbReference type="EMBL" id="LN999946">
    <property type="protein sequence ID" value="CZT99787.1"/>
    <property type="molecule type" value="Genomic_DNA"/>
</dbReference>
<dbReference type="RefSeq" id="XP_001348250.1">
    <property type="nucleotide sequence ID" value="XM_001348214.1"/>
</dbReference>
<dbReference type="PDB" id="5YIA">
    <property type="method" value="X-ray"/>
    <property type="resolution" value="2.00 A"/>
    <property type="chains" value="A=126-453"/>
</dbReference>
<dbReference type="PDB" id="5YIB">
    <property type="method" value="X-ray"/>
    <property type="resolution" value="2.15 A"/>
    <property type="chains" value="A=126-453"/>
</dbReference>
<dbReference type="PDB" id="5YIC">
    <property type="method" value="X-ray"/>
    <property type="resolution" value="1.90 A"/>
    <property type="chains" value="A=126-453"/>
</dbReference>
<dbReference type="PDB" id="5YID">
    <property type="method" value="X-ray"/>
    <property type="resolution" value="2.10 A"/>
    <property type="chains" value="A=127-453"/>
</dbReference>
<dbReference type="PDB" id="5YIE">
    <property type="method" value="X-ray"/>
    <property type="resolution" value="2.10 A"/>
    <property type="chains" value="A=127-453"/>
</dbReference>
<dbReference type="PDB" id="7QYH">
    <property type="method" value="X-ray"/>
    <property type="resolution" value="3.33 A"/>
    <property type="chains" value="A/B/C/D=125-453"/>
</dbReference>
<dbReference type="PDB" id="7VE0">
    <property type="method" value="X-ray"/>
    <property type="resolution" value="1.90 A"/>
    <property type="chains" value="A/B=123-453"/>
</dbReference>
<dbReference type="PDB" id="7VE2">
    <property type="method" value="X-ray"/>
    <property type="resolution" value="3.20 A"/>
    <property type="chains" value="A=123-453"/>
</dbReference>
<dbReference type="PDBsum" id="5YIA"/>
<dbReference type="PDBsum" id="5YIB"/>
<dbReference type="PDBsum" id="5YIC"/>
<dbReference type="PDBsum" id="5YID"/>
<dbReference type="PDBsum" id="5YIE"/>
<dbReference type="PDBsum" id="7QYH"/>
<dbReference type="PDBsum" id="7VE0"/>
<dbReference type="PDBsum" id="7VE2"/>
<dbReference type="SMR" id="Q8I6V3"/>
<dbReference type="FunCoup" id="Q8I6V3">
    <property type="interactions" value="13"/>
</dbReference>
<dbReference type="STRING" id="36329.Q8I6V3"/>
<dbReference type="MEROPS" id="A01.023"/>
<dbReference type="SwissPalm" id="Q8I6V3"/>
<dbReference type="PaxDb" id="5833-PF14_0077"/>
<dbReference type="EnsemblProtists" id="CZT99787">
    <property type="protein sequence ID" value="CZT99787"/>
    <property type="gene ID" value="PF3D7_1408000"/>
</dbReference>
<dbReference type="GeneID" id="811659"/>
<dbReference type="KEGG" id="pfa:PF3D7_1408000"/>
<dbReference type="VEuPathDB" id="PlasmoDB:PF3D7_1408000"/>
<dbReference type="HOGENOM" id="CLU_013253_3_2_1"/>
<dbReference type="InParanoid" id="Q8I6V3"/>
<dbReference type="OMA" id="KYDHDAS"/>
<dbReference type="OrthoDB" id="771136at2759"/>
<dbReference type="PhylomeDB" id="Q8I6V3"/>
<dbReference type="BRENDA" id="3.4.23.39">
    <property type="organism ID" value="4889"/>
</dbReference>
<dbReference type="Reactome" id="R-PFA-2132295">
    <property type="pathway name" value="MHC class II antigen presentation"/>
</dbReference>
<dbReference type="Reactome" id="R-PFA-6798695">
    <property type="pathway name" value="Neutrophil degranulation"/>
</dbReference>
<dbReference type="Proteomes" id="UP000001450">
    <property type="component" value="Chromosome 14"/>
</dbReference>
<dbReference type="GO" id="GO:0031910">
    <property type="term" value="C:cytostome"/>
    <property type="evidence" value="ECO:0000314"/>
    <property type="project" value="UniProtKB"/>
</dbReference>
<dbReference type="GO" id="GO:0020020">
    <property type="term" value="C:food vacuole"/>
    <property type="evidence" value="ECO:0000314"/>
    <property type="project" value="UniProtKB"/>
</dbReference>
<dbReference type="GO" id="GO:0005764">
    <property type="term" value="C:lysosome"/>
    <property type="evidence" value="ECO:0000318"/>
    <property type="project" value="GO_Central"/>
</dbReference>
<dbReference type="GO" id="GO:0005775">
    <property type="term" value="C:vacuolar lumen"/>
    <property type="evidence" value="ECO:0007669"/>
    <property type="project" value="UniProtKB-SubCell"/>
</dbReference>
<dbReference type="GO" id="GO:0005774">
    <property type="term" value="C:vacuolar membrane"/>
    <property type="evidence" value="ECO:0007669"/>
    <property type="project" value="UniProtKB-SubCell"/>
</dbReference>
<dbReference type="GO" id="GO:0004190">
    <property type="term" value="F:aspartic-type endopeptidase activity"/>
    <property type="evidence" value="ECO:0000314"/>
    <property type="project" value="UniProtKB"/>
</dbReference>
<dbReference type="GO" id="GO:0042540">
    <property type="term" value="P:hemoglobin catabolic process"/>
    <property type="evidence" value="ECO:0000304"/>
    <property type="project" value="GeneDB"/>
</dbReference>
<dbReference type="GO" id="GO:0006508">
    <property type="term" value="P:proteolysis"/>
    <property type="evidence" value="ECO:0000318"/>
    <property type="project" value="GO_Central"/>
</dbReference>
<dbReference type="CDD" id="cd05471">
    <property type="entry name" value="pepsin_like"/>
    <property type="match status" value="1"/>
</dbReference>
<dbReference type="FunFam" id="2.40.70.10:FF:000035">
    <property type="entry name" value="Plasmepsin-2"/>
    <property type="match status" value="1"/>
</dbReference>
<dbReference type="FunFam" id="2.40.70.10:FF:000038">
    <property type="entry name" value="Plasmepsin-2"/>
    <property type="match status" value="1"/>
</dbReference>
<dbReference type="Gene3D" id="2.40.70.10">
    <property type="entry name" value="Acid Proteases"/>
    <property type="match status" value="2"/>
</dbReference>
<dbReference type="InterPro" id="IPR001461">
    <property type="entry name" value="Aspartic_peptidase_A1"/>
</dbReference>
<dbReference type="InterPro" id="IPR001969">
    <property type="entry name" value="Aspartic_peptidase_AS"/>
</dbReference>
<dbReference type="InterPro" id="IPR034164">
    <property type="entry name" value="Pepsin-like_dom"/>
</dbReference>
<dbReference type="InterPro" id="IPR033121">
    <property type="entry name" value="PEPTIDASE_A1"/>
</dbReference>
<dbReference type="InterPro" id="IPR021109">
    <property type="entry name" value="Peptidase_aspartic_dom_sf"/>
</dbReference>
<dbReference type="PANTHER" id="PTHR47966">
    <property type="entry name" value="BETA-SITE APP-CLEAVING ENZYME, ISOFORM A-RELATED"/>
    <property type="match status" value="1"/>
</dbReference>
<dbReference type="PANTHER" id="PTHR47966:SF51">
    <property type="entry name" value="BETA-SITE APP-CLEAVING ENZYME, ISOFORM A-RELATED"/>
    <property type="match status" value="1"/>
</dbReference>
<dbReference type="Pfam" id="PF00026">
    <property type="entry name" value="Asp"/>
    <property type="match status" value="1"/>
</dbReference>
<dbReference type="PRINTS" id="PR00792">
    <property type="entry name" value="PEPSIN"/>
</dbReference>
<dbReference type="SUPFAM" id="SSF50630">
    <property type="entry name" value="Acid proteases"/>
    <property type="match status" value="1"/>
</dbReference>
<dbReference type="PROSITE" id="PS00141">
    <property type="entry name" value="ASP_PROTEASE"/>
    <property type="match status" value="2"/>
</dbReference>
<dbReference type="PROSITE" id="PS51767">
    <property type="entry name" value="PEPTIDASE_A1"/>
    <property type="match status" value="1"/>
</dbReference>
<name>PLM2_PLAF7</name>
<evidence type="ECO:0000250" key="1">
    <source>
        <dbReference type="UniProtKB" id="P46925"/>
    </source>
</evidence>
<evidence type="ECO:0000255" key="2"/>
<evidence type="ECO:0000255" key="3">
    <source>
        <dbReference type="PROSITE-ProRule" id="PRU01103"/>
    </source>
</evidence>
<evidence type="ECO:0000255" key="4">
    <source>
        <dbReference type="RuleBase" id="RU000454"/>
    </source>
</evidence>
<evidence type="ECO:0000269" key="5">
    <source>
    </source>
</evidence>
<evidence type="ECO:0000269" key="6">
    <source>
    </source>
</evidence>
<evidence type="ECO:0000269" key="7">
    <source>
    </source>
</evidence>
<evidence type="ECO:0000269" key="8">
    <source>
    </source>
</evidence>
<evidence type="ECO:0000269" key="9">
    <source>
    </source>
</evidence>
<evidence type="ECO:0000303" key="10">
    <source>
    </source>
</evidence>
<evidence type="ECO:0000303" key="11">
    <source>
    </source>
</evidence>
<evidence type="ECO:0000305" key="12"/>
<evidence type="ECO:0000312" key="13">
    <source>
        <dbReference type="EMBL" id="CZT99787.1"/>
    </source>
</evidence>
<evidence type="ECO:0000312" key="14">
    <source>
        <dbReference type="Proteomes" id="UP000001450"/>
    </source>
</evidence>
<evidence type="ECO:0007744" key="15">
    <source>
        <dbReference type="PDB" id="5YIA"/>
    </source>
</evidence>
<evidence type="ECO:0007744" key="16">
    <source>
        <dbReference type="PDB" id="5YIB"/>
    </source>
</evidence>
<evidence type="ECO:0007744" key="17">
    <source>
        <dbReference type="PDB" id="5YIC"/>
    </source>
</evidence>
<evidence type="ECO:0007744" key="18">
    <source>
        <dbReference type="PDB" id="5YID"/>
    </source>
</evidence>
<evidence type="ECO:0007744" key="19">
    <source>
        <dbReference type="PDB" id="5YIE"/>
    </source>
</evidence>
<evidence type="ECO:0007829" key="20">
    <source>
        <dbReference type="PDB" id="5YIC"/>
    </source>
</evidence>
<feature type="propeptide" id="PRO_0000453261" evidence="7">
    <location>
        <begin position="1"/>
        <end position="124"/>
    </location>
</feature>
<feature type="chain" id="PRO_0000453262" description="Plasmepsin II">
    <location>
        <begin position="125"/>
        <end position="453"/>
    </location>
</feature>
<feature type="topological domain" description="Cytoplasmic" evidence="12">
    <location>
        <begin position="1"/>
        <end position="37"/>
    </location>
</feature>
<feature type="transmembrane region" description="Helical; Signal-anchor for type II membrane protein" evidence="2">
    <location>
        <begin position="38"/>
        <end position="58"/>
    </location>
</feature>
<feature type="topological domain" description="Lumenal" evidence="12">
    <location>
        <begin position="59"/>
        <end position="453"/>
    </location>
</feature>
<feature type="domain" description="Peptidase A1" evidence="3">
    <location>
        <begin position="140"/>
        <end position="447"/>
    </location>
</feature>
<feature type="active site" evidence="3">
    <location>
        <position position="158"/>
    </location>
</feature>
<feature type="active site" evidence="3">
    <location>
        <position position="338"/>
    </location>
</feature>
<feature type="disulfide bond" evidence="9 15 16">
    <location>
        <begin position="171"/>
        <end position="176"/>
    </location>
</feature>
<feature type="disulfide bond" evidence="9 15 16">
    <location>
        <begin position="373"/>
        <end position="409"/>
    </location>
</feature>
<feature type="strand" evidence="20">
    <location>
        <begin position="128"/>
        <end position="135"/>
    </location>
</feature>
<feature type="turn" evidence="20">
    <location>
        <begin position="136"/>
        <end position="138"/>
    </location>
</feature>
<feature type="strand" evidence="20">
    <location>
        <begin position="139"/>
        <end position="146"/>
    </location>
</feature>
<feature type="turn" evidence="20">
    <location>
        <begin position="147"/>
        <end position="150"/>
    </location>
</feature>
<feature type="strand" evidence="20">
    <location>
        <begin position="151"/>
        <end position="158"/>
    </location>
</feature>
<feature type="strand" evidence="20">
    <location>
        <begin position="164"/>
        <end position="168"/>
    </location>
</feature>
<feature type="helix" evidence="20">
    <location>
        <begin position="174"/>
        <end position="178"/>
    </location>
</feature>
<feature type="helix" evidence="20">
    <location>
        <begin position="184"/>
        <end position="186"/>
    </location>
</feature>
<feature type="strand" evidence="20">
    <location>
        <begin position="191"/>
        <end position="201"/>
    </location>
</feature>
<feature type="strand" evidence="20">
    <location>
        <begin position="204"/>
        <end position="217"/>
    </location>
</feature>
<feature type="strand" evidence="20">
    <location>
        <begin position="220"/>
        <end position="231"/>
    </location>
</feature>
<feature type="helix" evidence="20">
    <location>
        <begin position="233"/>
        <end position="235"/>
    </location>
</feature>
<feature type="helix" evidence="20">
    <location>
        <begin position="238"/>
        <end position="241"/>
    </location>
</feature>
<feature type="strand" evidence="20">
    <location>
        <begin position="246"/>
        <end position="249"/>
    </location>
</feature>
<feature type="helix" evidence="20">
    <location>
        <begin position="253"/>
        <end position="255"/>
    </location>
</feature>
<feature type="strand" evidence="20">
    <location>
        <begin position="256"/>
        <end position="258"/>
    </location>
</feature>
<feature type="helix" evidence="20">
    <location>
        <begin position="263"/>
        <end position="269"/>
    </location>
</feature>
<feature type="strand" evidence="20">
    <location>
        <begin position="272"/>
        <end position="281"/>
    </location>
</feature>
<feature type="turn" evidence="20">
    <location>
        <begin position="285"/>
        <end position="287"/>
    </location>
</feature>
<feature type="strand" evidence="20">
    <location>
        <begin position="290"/>
        <end position="296"/>
    </location>
</feature>
<feature type="helix" evidence="20">
    <location>
        <begin position="299"/>
        <end position="301"/>
    </location>
</feature>
<feature type="strand" evidence="20">
    <location>
        <begin position="302"/>
        <end position="310"/>
    </location>
</feature>
<feature type="strand" evidence="20">
    <location>
        <begin position="312"/>
        <end position="316"/>
    </location>
</feature>
<feature type="strand" evidence="20">
    <location>
        <begin position="318"/>
        <end position="325"/>
    </location>
</feature>
<feature type="strand" evidence="20">
    <location>
        <begin position="328"/>
        <end position="337"/>
    </location>
</feature>
<feature type="strand" evidence="20">
    <location>
        <begin position="343"/>
        <end position="346"/>
    </location>
</feature>
<feature type="helix" evidence="20">
    <location>
        <begin position="348"/>
        <end position="355"/>
    </location>
</feature>
<feature type="strand" evidence="20">
    <location>
        <begin position="369"/>
        <end position="372"/>
    </location>
</feature>
<feature type="strand" evidence="20">
    <location>
        <begin position="381"/>
        <end position="384"/>
    </location>
</feature>
<feature type="strand" evidence="20">
    <location>
        <begin position="389"/>
        <end position="392"/>
    </location>
</feature>
<feature type="helix" evidence="20">
    <location>
        <begin position="394"/>
        <end position="397"/>
    </location>
</feature>
<feature type="strand" evidence="20">
    <location>
        <begin position="398"/>
        <end position="400"/>
    </location>
</feature>
<feature type="turn" evidence="20">
    <location>
        <begin position="402"/>
        <end position="404"/>
    </location>
</feature>
<feature type="strand" evidence="20">
    <location>
        <begin position="408"/>
        <end position="411"/>
    </location>
</feature>
<feature type="strand" evidence="20">
    <location>
        <begin position="413"/>
        <end position="415"/>
    </location>
</feature>
<feature type="strand" evidence="20">
    <location>
        <begin position="422"/>
        <end position="425"/>
    </location>
</feature>
<feature type="helix" evidence="20">
    <location>
        <begin position="427"/>
        <end position="432"/>
    </location>
</feature>
<feature type="strand" evidence="20">
    <location>
        <begin position="433"/>
        <end position="438"/>
    </location>
</feature>
<feature type="turn" evidence="20">
    <location>
        <begin position="439"/>
        <end position="442"/>
    </location>
</feature>
<feature type="strand" evidence="20">
    <location>
        <begin position="443"/>
        <end position="449"/>
    </location>
</feature>
<comment type="function">
    <text evidence="1 9 12">During the asexual blood stage, participates in initial cleavage of native host hemoglobin (Hb) resulting in Hb denaturation (PubMed:29943906). May cleave preferentially denatured hemoglobin that has been cleaved by PMI (By similarity). Digestion of host Hb is an essential step which provides the parasite with amino acids for protein synthesis, and regulates osmolarity (Probable).</text>
</comment>
<comment type="catalytic activity">
    <reaction evidence="9">
        <text>Hydrolysis of the bonds linking certain hydrophobic residues in hemoglobin or globin. Also cleaves small molecules substrates such as Ala-Leu-Glu-Arg-Thr-Phe-|-Phe(NO2)-Ser-Phe-Pro-Thr.</text>
        <dbReference type="EC" id="3.4.23.39"/>
    </reaction>
</comment>
<comment type="activity regulation">
    <text evidence="9">Inhibited by pepstatin A (PubMed:29943906). Inhibited by KNI derived compounds (KNI-10742, 10743, 10395, 10333, and 10343) (PubMed:29943906).</text>
</comment>
<comment type="subunit">
    <text evidence="8">Component of the hemozoin formation complex (HFC) composed of falcipains FP2A and/or FP2B, plasmepsins PMII, PMIII/HAP and PMIV, heme detoxifying protein HDP and falcilysin FLN (PubMed:23471987). The HFC complex is involved in hemoglobin degradation and detoxification of heme in the food vacuole during the asexual blood stage (PubMed:23471987).</text>
</comment>
<comment type="subcellular location">
    <subcellularLocation>
        <location evidence="5">Membrane</location>
        <topology evidence="2">Single-pass type II membrane protein</topology>
    </subcellularLocation>
    <subcellularLocation>
        <location evidence="5 8">Vacuole lumen</location>
    </subcellularLocation>
    <subcellularLocation>
        <location evidence="5">Vacuole membrane</location>
    </subcellularLocation>
    <text evidence="5">At the beginning of the asexual blood stage, the transmembrane zymogen is transported to the cytostome, an endocytic structure spanning the parasite cell membrane and the parasitophorous vacuole membrane where host proteins such as hemoglobin are endocytosed (PubMed:14709539). Following endocytosis, localizes to the cytostome vacuole membrane to be then delivered to the digestive (or food) vacuole where it is cleaved into the soluble and active enzyme (PubMed:14709539). In trophozoites, localizes to the digestive vacuole, an acidic vacuole where host hemoglobin is digested (PubMed:14709539).</text>
</comment>
<comment type="developmental stage">
    <text evidence="5 8">Expressed during the asexual blood stage including in trophozoites (at protein level).</text>
</comment>
<comment type="PTM">
    <text evidence="1">Not N-glycosylated.</text>
</comment>
<comment type="PTM">
    <text evidence="5 7">Proteolytically cleaved into the soluble active mature form in the digestive vacuole by cysteine protease falcipains; the process begins at the early ring stage (PubMed:14709539, PubMed:18308731). Proteolysis requires an acidic environment (PubMed:14709539, PubMed:18308731). In absence of falcipains, autoprocessing may serve as an alternate activation system (PubMed:18308731).</text>
</comment>
<comment type="disruption phenotype">
    <text evidence="6">Slight decrease in proliferation and slight increase in doubling time during the asexual blood stage.</text>
</comment>
<comment type="similarity">
    <text evidence="4">Belongs to the peptidase A1 family.</text>
</comment>
<gene>
    <name evidence="11" type="primary">PMII</name>
    <name evidence="13" type="ORF">PF3D7_1408000</name>
</gene>